<organism>
    <name type="scientific">Arabidopsis thaliana</name>
    <name type="common">Mouse-ear cress</name>
    <dbReference type="NCBI Taxonomy" id="3702"/>
    <lineage>
        <taxon>Eukaryota</taxon>
        <taxon>Viridiplantae</taxon>
        <taxon>Streptophyta</taxon>
        <taxon>Embryophyta</taxon>
        <taxon>Tracheophyta</taxon>
        <taxon>Spermatophyta</taxon>
        <taxon>Magnoliopsida</taxon>
        <taxon>eudicotyledons</taxon>
        <taxon>Gunneridae</taxon>
        <taxon>Pentapetalae</taxon>
        <taxon>rosids</taxon>
        <taxon>malvids</taxon>
        <taxon>Brassicales</taxon>
        <taxon>Brassicaceae</taxon>
        <taxon>Camelineae</taxon>
        <taxon>Arabidopsis</taxon>
    </lineage>
</organism>
<sequence>MTTMATQGAWLRMTSSAKSMTKSTVTSKELGFLTSQLSGLRISYTPSDVINRISLPSFPGIQPIVARRICPFTGKKANRANKVSFSNHKTKKLQFVNLQYKRVWWEAGKRFVKLRLSTKALKTIEKNGLDAVAKKAGIDLRKK</sequence>
<reference key="1">
    <citation type="journal article" date="1999" name="Nature">
        <title>Sequence and analysis of chromosome 2 of the plant Arabidopsis thaliana.</title>
        <authorList>
            <person name="Lin X."/>
            <person name="Kaul S."/>
            <person name="Rounsley S.D."/>
            <person name="Shea T.P."/>
            <person name="Benito M.-I."/>
            <person name="Town C.D."/>
            <person name="Fujii C.Y."/>
            <person name="Mason T.M."/>
            <person name="Bowman C.L."/>
            <person name="Barnstead M.E."/>
            <person name="Feldblyum T.V."/>
            <person name="Buell C.R."/>
            <person name="Ketchum K.A."/>
            <person name="Lee J.J."/>
            <person name="Ronning C.M."/>
            <person name="Koo H.L."/>
            <person name="Moffat K.S."/>
            <person name="Cronin L.A."/>
            <person name="Shen M."/>
            <person name="Pai G."/>
            <person name="Van Aken S."/>
            <person name="Umayam L."/>
            <person name="Tallon L.J."/>
            <person name="Gill J.E."/>
            <person name="Adams M.D."/>
            <person name="Carrera A.J."/>
            <person name="Creasy T.H."/>
            <person name="Goodman H.M."/>
            <person name="Somerville C.R."/>
            <person name="Copenhaver G.P."/>
            <person name="Preuss D."/>
            <person name="Nierman W.C."/>
            <person name="White O."/>
            <person name="Eisen J.A."/>
            <person name="Salzberg S.L."/>
            <person name="Fraser C.M."/>
            <person name="Venter J.C."/>
        </authorList>
    </citation>
    <scope>NUCLEOTIDE SEQUENCE [LARGE SCALE GENOMIC DNA]</scope>
    <source>
        <strain>cv. Columbia</strain>
    </source>
</reference>
<reference key="2">
    <citation type="journal article" date="2017" name="Plant J.">
        <title>Araport11: a complete reannotation of the Arabidopsis thaliana reference genome.</title>
        <authorList>
            <person name="Cheng C.Y."/>
            <person name="Krishnakumar V."/>
            <person name="Chan A.P."/>
            <person name="Thibaud-Nissen F."/>
            <person name="Schobel S."/>
            <person name="Town C.D."/>
        </authorList>
    </citation>
    <scope>GENOME REANNOTATION</scope>
    <source>
        <strain>cv. Columbia</strain>
    </source>
</reference>
<reference key="3">
    <citation type="journal article" date="2003" name="Science">
        <title>Empirical analysis of transcriptional activity in the Arabidopsis genome.</title>
        <authorList>
            <person name="Yamada K."/>
            <person name="Lim J."/>
            <person name="Dale J.M."/>
            <person name="Chen H."/>
            <person name="Shinn P."/>
            <person name="Palm C.J."/>
            <person name="Southwick A.M."/>
            <person name="Wu H.C."/>
            <person name="Kim C.J."/>
            <person name="Nguyen M."/>
            <person name="Pham P.K."/>
            <person name="Cheuk R.F."/>
            <person name="Karlin-Newmann G."/>
            <person name="Liu S.X."/>
            <person name="Lam B."/>
            <person name="Sakano H."/>
            <person name="Wu T."/>
            <person name="Yu G."/>
            <person name="Miranda M."/>
            <person name="Quach H.L."/>
            <person name="Tripp M."/>
            <person name="Chang C.H."/>
            <person name="Lee J.M."/>
            <person name="Toriumi M.J."/>
            <person name="Chan M.M."/>
            <person name="Tang C.C."/>
            <person name="Onodera C.S."/>
            <person name="Deng J.M."/>
            <person name="Akiyama K."/>
            <person name="Ansari Y."/>
            <person name="Arakawa T."/>
            <person name="Banh J."/>
            <person name="Banno F."/>
            <person name="Bowser L."/>
            <person name="Brooks S.Y."/>
            <person name="Carninci P."/>
            <person name="Chao Q."/>
            <person name="Choy N."/>
            <person name="Enju A."/>
            <person name="Goldsmith A.D."/>
            <person name="Gurjal M."/>
            <person name="Hansen N.F."/>
            <person name="Hayashizaki Y."/>
            <person name="Johnson-Hopson C."/>
            <person name="Hsuan V.W."/>
            <person name="Iida K."/>
            <person name="Karnes M."/>
            <person name="Khan S."/>
            <person name="Koesema E."/>
            <person name="Ishida J."/>
            <person name="Jiang P.X."/>
            <person name="Jones T."/>
            <person name="Kawai J."/>
            <person name="Kamiya A."/>
            <person name="Meyers C."/>
            <person name="Nakajima M."/>
            <person name="Narusaka M."/>
            <person name="Seki M."/>
            <person name="Sakurai T."/>
            <person name="Satou M."/>
            <person name="Tamse R."/>
            <person name="Vaysberg M."/>
            <person name="Wallender E.K."/>
            <person name="Wong C."/>
            <person name="Yamamura Y."/>
            <person name="Yuan S."/>
            <person name="Shinozaki K."/>
            <person name="Davis R.W."/>
            <person name="Theologis A."/>
            <person name="Ecker J.R."/>
        </authorList>
    </citation>
    <scope>NUCLEOTIDE SEQUENCE [LARGE SCALE MRNA]</scope>
    <source>
        <strain>cv. Columbia</strain>
    </source>
</reference>
<reference key="4">
    <citation type="submission" date="2002-03" db="EMBL/GenBank/DDBJ databases">
        <title>Full-length cDNA from Arabidopsis thaliana.</title>
        <authorList>
            <person name="Brover V.V."/>
            <person name="Troukhan M.E."/>
            <person name="Alexandrov N.A."/>
            <person name="Lu Y.-P."/>
            <person name="Flavell R.B."/>
            <person name="Feldmann K.A."/>
        </authorList>
    </citation>
    <scope>NUCLEOTIDE SEQUENCE [LARGE SCALE MRNA]</scope>
</reference>
<reference key="5">
    <citation type="journal article" date="2012" name="Plant J.">
        <title>Versatile roles of Arabidopsis plastid ribosomal proteins in plant growth and development.</title>
        <authorList>
            <person name="Romani I."/>
            <person name="Tadini L."/>
            <person name="Rossi F."/>
            <person name="Masiero S."/>
            <person name="Pribil M."/>
            <person name="Jahns P."/>
            <person name="Kater M."/>
            <person name="Leister D."/>
            <person name="Pesaresi P."/>
        </authorList>
    </citation>
    <scope>DISRUPTION PHENOTYPE</scope>
</reference>
<reference key="6">
    <citation type="journal article" date="2023" name="Plant Cell">
        <title>An updated nomenclature for plant ribosomal protein genes.</title>
        <authorList>
            <person name="Scarpin M.R."/>
            <person name="Busche M."/>
            <person name="Martinez R.E."/>
            <person name="Harper L.C."/>
            <person name="Reiser L."/>
            <person name="Szakonyi D."/>
            <person name="Merchante C."/>
            <person name="Lan T."/>
            <person name="Xiong W."/>
            <person name="Mo B."/>
            <person name="Tang G."/>
            <person name="Chen X."/>
            <person name="Bailey-Serres J."/>
            <person name="Browning K.S."/>
            <person name="Brunkard J.O."/>
        </authorList>
    </citation>
    <scope>NOMENCLATURE</scope>
</reference>
<keyword id="KW-0150">Chloroplast</keyword>
<keyword id="KW-0934">Plastid</keyword>
<keyword id="KW-1185">Reference proteome</keyword>
<keyword id="KW-0687">Ribonucleoprotein</keyword>
<keyword id="KW-0689">Ribosomal protein</keyword>
<keyword id="KW-0809">Transit peptide</keyword>
<accession>O22795</accession>
<accession>Q8VY79</accession>
<proteinExistence type="evidence at transcript level"/>
<protein>
    <recommendedName>
        <fullName evidence="3">Large ribosomal subunit protein bL28c</fullName>
    </recommendedName>
    <alternativeName>
        <fullName>50S ribosomal protein L28, chloroplastic</fullName>
    </alternativeName>
    <alternativeName>
        <fullName>CL28</fullName>
    </alternativeName>
</protein>
<evidence type="ECO:0000250" key="1"/>
<evidence type="ECO:0000269" key="2">
    <source>
    </source>
</evidence>
<evidence type="ECO:0000303" key="3">
    <source>
    </source>
</evidence>
<evidence type="ECO:0000305" key="4"/>
<gene>
    <name type="primary">RPL28</name>
    <name type="ordered locus">At2g33450</name>
    <name type="ORF">F4P9.22</name>
</gene>
<comment type="subunit">
    <text evidence="1">Part of the 50S ribosomal subunit.</text>
</comment>
<comment type="subcellular location">
    <subcellularLocation>
        <location evidence="1">Plastid</location>
        <location evidence="1">Chloroplast</location>
    </subcellularLocation>
</comment>
<comment type="disruption phenotype">
    <text evidence="2">Seedling lethality. Albino seedlings unable to grow under photoautotrophic conditions.</text>
</comment>
<comment type="similarity">
    <text evidence="4">Belongs to the bacterial ribosomal protein bL28 family.</text>
</comment>
<dbReference type="EMBL" id="AC002332">
    <property type="protein sequence ID" value="AAB80662.2"/>
    <property type="molecule type" value="Genomic_DNA"/>
</dbReference>
<dbReference type="EMBL" id="CP002685">
    <property type="protein sequence ID" value="AEC08836.1"/>
    <property type="molecule type" value="Genomic_DNA"/>
</dbReference>
<dbReference type="EMBL" id="AY072373">
    <property type="protein sequence ID" value="AAL62365.1"/>
    <property type="molecule type" value="mRNA"/>
</dbReference>
<dbReference type="EMBL" id="AY114618">
    <property type="protein sequence ID" value="AAM47937.1"/>
    <property type="molecule type" value="mRNA"/>
</dbReference>
<dbReference type="EMBL" id="AY087094">
    <property type="protein sequence ID" value="AAM64654.1"/>
    <property type="molecule type" value="mRNA"/>
</dbReference>
<dbReference type="PIR" id="F84745">
    <property type="entry name" value="F84745"/>
</dbReference>
<dbReference type="RefSeq" id="NP_565765.1">
    <property type="nucleotide sequence ID" value="NM_128905.3"/>
</dbReference>
<dbReference type="SMR" id="O22795"/>
<dbReference type="BioGRID" id="3257">
    <property type="interactions" value="14"/>
</dbReference>
<dbReference type="FunCoup" id="O22795">
    <property type="interactions" value="663"/>
</dbReference>
<dbReference type="IntAct" id="O22795">
    <property type="interactions" value="1"/>
</dbReference>
<dbReference type="STRING" id="3702.O22795"/>
<dbReference type="PaxDb" id="3702-AT2G33450.1"/>
<dbReference type="ProteomicsDB" id="234853"/>
<dbReference type="EnsemblPlants" id="AT2G33450.1">
    <property type="protein sequence ID" value="AT2G33450.1"/>
    <property type="gene ID" value="AT2G33450"/>
</dbReference>
<dbReference type="GeneID" id="817910"/>
<dbReference type="Gramene" id="AT2G33450.1">
    <property type="protein sequence ID" value="AT2G33450.1"/>
    <property type="gene ID" value="AT2G33450"/>
</dbReference>
<dbReference type="KEGG" id="ath:AT2G33450"/>
<dbReference type="Araport" id="AT2G33450"/>
<dbReference type="TAIR" id="AT2G33450">
    <property type="gene designation" value="PRPL28"/>
</dbReference>
<dbReference type="eggNOG" id="ENOG502S1B9">
    <property type="taxonomic scope" value="Eukaryota"/>
</dbReference>
<dbReference type="HOGENOM" id="CLU_064548_5_0_1"/>
<dbReference type="InParanoid" id="O22795"/>
<dbReference type="OMA" id="WEAGNRF"/>
<dbReference type="OrthoDB" id="361870at2759"/>
<dbReference type="PhylomeDB" id="O22795"/>
<dbReference type="PRO" id="PR:O22795"/>
<dbReference type="Proteomes" id="UP000006548">
    <property type="component" value="Chromosome 2"/>
</dbReference>
<dbReference type="ExpressionAtlas" id="O22795">
    <property type="expression patterns" value="baseline and differential"/>
</dbReference>
<dbReference type="GO" id="GO:0009507">
    <property type="term" value="C:chloroplast"/>
    <property type="evidence" value="ECO:0007005"/>
    <property type="project" value="TAIR"/>
</dbReference>
<dbReference type="GO" id="GO:0009941">
    <property type="term" value="C:chloroplast envelope"/>
    <property type="evidence" value="ECO:0007005"/>
    <property type="project" value="TAIR"/>
</dbReference>
<dbReference type="GO" id="GO:0009570">
    <property type="term" value="C:chloroplast stroma"/>
    <property type="evidence" value="ECO:0007005"/>
    <property type="project" value="TAIR"/>
</dbReference>
<dbReference type="GO" id="GO:0005783">
    <property type="term" value="C:endoplasmic reticulum"/>
    <property type="evidence" value="ECO:0007005"/>
    <property type="project" value="TAIR"/>
</dbReference>
<dbReference type="GO" id="GO:1990904">
    <property type="term" value="C:ribonucleoprotein complex"/>
    <property type="evidence" value="ECO:0007669"/>
    <property type="project" value="UniProtKB-KW"/>
</dbReference>
<dbReference type="GO" id="GO:0005840">
    <property type="term" value="C:ribosome"/>
    <property type="evidence" value="ECO:0007669"/>
    <property type="project" value="UniProtKB-KW"/>
</dbReference>
<dbReference type="GO" id="GO:0003729">
    <property type="term" value="F:mRNA binding"/>
    <property type="evidence" value="ECO:0000314"/>
    <property type="project" value="TAIR"/>
</dbReference>
<dbReference type="GO" id="GO:0003735">
    <property type="term" value="F:structural constituent of ribosome"/>
    <property type="evidence" value="ECO:0007669"/>
    <property type="project" value="InterPro"/>
</dbReference>
<dbReference type="GO" id="GO:0006412">
    <property type="term" value="P:translation"/>
    <property type="evidence" value="ECO:0007669"/>
    <property type="project" value="InterPro"/>
</dbReference>
<dbReference type="FunFam" id="2.30.170.40:FF:000005">
    <property type="entry name" value="50S ribosomal L28, chloroplastic"/>
    <property type="match status" value="1"/>
</dbReference>
<dbReference type="Gene3D" id="2.30.170.40">
    <property type="entry name" value="Ribosomal protein L28/L24"/>
    <property type="match status" value="1"/>
</dbReference>
<dbReference type="HAMAP" id="MF_00373">
    <property type="entry name" value="Ribosomal_bL28"/>
    <property type="match status" value="1"/>
</dbReference>
<dbReference type="InterPro" id="IPR026569">
    <property type="entry name" value="Ribosomal_bL28"/>
</dbReference>
<dbReference type="InterPro" id="IPR034704">
    <property type="entry name" value="Ribosomal_bL28/bL31-like_sf"/>
</dbReference>
<dbReference type="InterPro" id="IPR001383">
    <property type="entry name" value="Ribosomal_bL28_bact-type"/>
</dbReference>
<dbReference type="InterPro" id="IPR037147">
    <property type="entry name" value="Ribosomal_bL28_sf"/>
</dbReference>
<dbReference type="NCBIfam" id="TIGR00009">
    <property type="entry name" value="L28"/>
    <property type="match status" value="1"/>
</dbReference>
<dbReference type="PANTHER" id="PTHR13528">
    <property type="entry name" value="39S RIBOSOMAL PROTEIN L28, MITOCHONDRIAL"/>
    <property type="match status" value="1"/>
</dbReference>
<dbReference type="PANTHER" id="PTHR13528:SF2">
    <property type="entry name" value="LARGE RIBOSOMAL SUBUNIT PROTEIN BL28M"/>
    <property type="match status" value="1"/>
</dbReference>
<dbReference type="Pfam" id="PF00830">
    <property type="entry name" value="Ribosomal_L28"/>
    <property type="match status" value="1"/>
</dbReference>
<dbReference type="SUPFAM" id="SSF143800">
    <property type="entry name" value="L28p-like"/>
    <property type="match status" value="1"/>
</dbReference>
<name>RK28_ARATH</name>
<feature type="transit peptide" description="Chloroplast" evidence="1">
    <location>
        <begin position="1"/>
        <end position="66"/>
    </location>
</feature>
<feature type="chain" id="PRO_0000030504" description="Large ribosomal subunit protein bL28c">
    <location>
        <begin position="67"/>
        <end position="143"/>
    </location>
</feature>